<dbReference type="EC" id="1.1.1.25" evidence="1"/>
<dbReference type="EMBL" id="CP000931">
    <property type="protein sequence ID" value="ABZ74611.1"/>
    <property type="molecule type" value="Genomic_DNA"/>
</dbReference>
<dbReference type="SMR" id="B0TLD8"/>
<dbReference type="STRING" id="458817.Shal_0035"/>
<dbReference type="KEGG" id="shl:Shal_0035"/>
<dbReference type="eggNOG" id="COG0169">
    <property type="taxonomic scope" value="Bacteria"/>
</dbReference>
<dbReference type="HOGENOM" id="CLU_044063_2_1_6"/>
<dbReference type="UniPathway" id="UPA00053">
    <property type="reaction ID" value="UER00087"/>
</dbReference>
<dbReference type="Proteomes" id="UP000001317">
    <property type="component" value="Chromosome"/>
</dbReference>
<dbReference type="GO" id="GO:0005829">
    <property type="term" value="C:cytosol"/>
    <property type="evidence" value="ECO:0007669"/>
    <property type="project" value="TreeGrafter"/>
</dbReference>
<dbReference type="GO" id="GO:0050661">
    <property type="term" value="F:NADP binding"/>
    <property type="evidence" value="ECO:0007669"/>
    <property type="project" value="InterPro"/>
</dbReference>
<dbReference type="GO" id="GO:0004764">
    <property type="term" value="F:shikimate 3-dehydrogenase (NADP+) activity"/>
    <property type="evidence" value="ECO:0007669"/>
    <property type="project" value="UniProtKB-UniRule"/>
</dbReference>
<dbReference type="GO" id="GO:0008652">
    <property type="term" value="P:amino acid biosynthetic process"/>
    <property type="evidence" value="ECO:0007669"/>
    <property type="project" value="UniProtKB-KW"/>
</dbReference>
<dbReference type="GO" id="GO:0009073">
    <property type="term" value="P:aromatic amino acid family biosynthetic process"/>
    <property type="evidence" value="ECO:0007669"/>
    <property type="project" value="UniProtKB-KW"/>
</dbReference>
<dbReference type="GO" id="GO:0009423">
    <property type="term" value="P:chorismate biosynthetic process"/>
    <property type="evidence" value="ECO:0007669"/>
    <property type="project" value="UniProtKB-UniRule"/>
</dbReference>
<dbReference type="GO" id="GO:0019632">
    <property type="term" value="P:shikimate metabolic process"/>
    <property type="evidence" value="ECO:0007669"/>
    <property type="project" value="InterPro"/>
</dbReference>
<dbReference type="CDD" id="cd01065">
    <property type="entry name" value="NAD_bind_Shikimate_DH"/>
    <property type="match status" value="1"/>
</dbReference>
<dbReference type="FunFam" id="3.40.50.10860:FF:000006">
    <property type="entry name" value="Shikimate dehydrogenase (NADP(+))"/>
    <property type="match status" value="1"/>
</dbReference>
<dbReference type="FunFam" id="3.40.50.720:FF:000104">
    <property type="entry name" value="Shikimate dehydrogenase (NADP(+))"/>
    <property type="match status" value="1"/>
</dbReference>
<dbReference type="Gene3D" id="3.40.50.10860">
    <property type="entry name" value="Leucine Dehydrogenase, chain A, domain 1"/>
    <property type="match status" value="1"/>
</dbReference>
<dbReference type="Gene3D" id="3.40.50.720">
    <property type="entry name" value="NAD(P)-binding Rossmann-like Domain"/>
    <property type="match status" value="1"/>
</dbReference>
<dbReference type="HAMAP" id="MF_00222">
    <property type="entry name" value="Shikimate_DH_AroE"/>
    <property type="match status" value="1"/>
</dbReference>
<dbReference type="InterPro" id="IPR046346">
    <property type="entry name" value="Aminoacid_DH-like_N_sf"/>
</dbReference>
<dbReference type="InterPro" id="IPR036291">
    <property type="entry name" value="NAD(P)-bd_dom_sf"/>
</dbReference>
<dbReference type="InterPro" id="IPR041121">
    <property type="entry name" value="SDH_C"/>
</dbReference>
<dbReference type="InterPro" id="IPR011342">
    <property type="entry name" value="Shikimate_DH"/>
</dbReference>
<dbReference type="InterPro" id="IPR013708">
    <property type="entry name" value="Shikimate_DH-bd_N"/>
</dbReference>
<dbReference type="InterPro" id="IPR022893">
    <property type="entry name" value="Shikimate_DH_fam"/>
</dbReference>
<dbReference type="InterPro" id="IPR006151">
    <property type="entry name" value="Shikm_DH/Glu-tRNA_Rdtase"/>
</dbReference>
<dbReference type="NCBIfam" id="TIGR00507">
    <property type="entry name" value="aroE"/>
    <property type="match status" value="1"/>
</dbReference>
<dbReference type="NCBIfam" id="NF001310">
    <property type="entry name" value="PRK00258.1-2"/>
    <property type="match status" value="1"/>
</dbReference>
<dbReference type="PANTHER" id="PTHR21089:SF1">
    <property type="entry name" value="BIFUNCTIONAL 3-DEHYDROQUINATE DEHYDRATASE_SHIKIMATE DEHYDROGENASE, CHLOROPLASTIC"/>
    <property type="match status" value="1"/>
</dbReference>
<dbReference type="PANTHER" id="PTHR21089">
    <property type="entry name" value="SHIKIMATE DEHYDROGENASE"/>
    <property type="match status" value="1"/>
</dbReference>
<dbReference type="Pfam" id="PF18317">
    <property type="entry name" value="SDH_C"/>
    <property type="match status" value="1"/>
</dbReference>
<dbReference type="Pfam" id="PF01488">
    <property type="entry name" value="Shikimate_DH"/>
    <property type="match status" value="1"/>
</dbReference>
<dbReference type="Pfam" id="PF08501">
    <property type="entry name" value="Shikimate_dh_N"/>
    <property type="match status" value="1"/>
</dbReference>
<dbReference type="SUPFAM" id="SSF53223">
    <property type="entry name" value="Aminoacid dehydrogenase-like, N-terminal domain"/>
    <property type="match status" value="1"/>
</dbReference>
<dbReference type="SUPFAM" id="SSF51735">
    <property type="entry name" value="NAD(P)-binding Rossmann-fold domains"/>
    <property type="match status" value="1"/>
</dbReference>
<comment type="function">
    <text evidence="1">Involved in the biosynthesis of the chorismate, which leads to the biosynthesis of aromatic amino acids. Catalyzes the reversible NADPH linked reduction of 3-dehydroshikimate (DHSA) to yield shikimate (SA).</text>
</comment>
<comment type="catalytic activity">
    <reaction evidence="1">
        <text>shikimate + NADP(+) = 3-dehydroshikimate + NADPH + H(+)</text>
        <dbReference type="Rhea" id="RHEA:17737"/>
        <dbReference type="ChEBI" id="CHEBI:15378"/>
        <dbReference type="ChEBI" id="CHEBI:16630"/>
        <dbReference type="ChEBI" id="CHEBI:36208"/>
        <dbReference type="ChEBI" id="CHEBI:57783"/>
        <dbReference type="ChEBI" id="CHEBI:58349"/>
        <dbReference type="EC" id="1.1.1.25"/>
    </reaction>
</comment>
<comment type="pathway">
    <text evidence="1">Metabolic intermediate biosynthesis; chorismate biosynthesis; chorismate from D-erythrose 4-phosphate and phosphoenolpyruvate: step 4/7.</text>
</comment>
<comment type="subunit">
    <text evidence="1">Homodimer.</text>
</comment>
<comment type="similarity">
    <text evidence="1">Belongs to the shikimate dehydrogenase family.</text>
</comment>
<keyword id="KW-0028">Amino-acid biosynthesis</keyword>
<keyword id="KW-0057">Aromatic amino acid biosynthesis</keyword>
<keyword id="KW-0521">NADP</keyword>
<keyword id="KW-0560">Oxidoreductase</keyword>
<organism>
    <name type="scientific">Shewanella halifaxensis (strain HAW-EB4)</name>
    <dbReference type="NCBI Taxonomy" id="458817"/>
    <lineage>
        <taxon>Bacteria</taxon>
        <taxon>Pseudomonadati</taxon>
        <taxon>Pseudomonadota</taxon>
        <taxon>Gammaproteobacteria</taxon>
        <taxon>Alteromonadales</taxon>
        <taxon>Shewanellaceae</taxon>
        <taxon>Shewanella</taxon>
    </lineage>
</organism>
<evidence type="ECO:0000255" key="1">
    <source>
        <dbReference type="HAMAP-Rule" id="MF_00222"/>
    </source>
</evidence>
<accession>B0TLD8</accession>
<name>AROE_SHEHH</name>
<feature type="chain" id="PRO_1000078127" description="Shikimate dehydrogenase (NADP(+))">
    <location>
        <begin position="1"/>
        <end position="279"/>
    </location>
</feature>
<feature type="active site" description="Proton acceptor" evidence="1">
    <location>
        <position position="72"/>
    </location>
</feature>
<feature type="binding site" evidence="1">
    <location>
        <begin position="21"/>
        <end position="23"/>
    </location>
    <ligand>
        <name>shikimate</name>
        <dbReference type="ChEBI" id="CHEBI:36208"/>
    </ligand>
</feature>
<feature type="binding site" evidence="1">
    <location>
        <position position="68"/>
    </location>
    <ligand>
        <name>shikimate</name>
        <dbReference type="ChEBI" id="CHEBI:36208"/>
    </ligand>
</feature>
<feature type="binding site" evidence="1">
    <location>
        <position position="84"/>
    </location>
    <ligand>
        <name>NADP(+)</name>
        <dbReference type="ChEBI" id="CHEBI:58349"/>
    </ligand>
</feature>
<feature type="binding site" evidence="1">
    <location>
        <position position="93"/>
    </location>
    <ligand>
        <name>shikimate</name>
        <dbReference type="ChEBI" id="CHEBI:36208"/>
    </ligand>
</feature>
<feature type="binding site" evidence="1">
    <location>
        <position position="109"/>
    </location>
    <ligand>
        <name>shikimate</name>
        <dbReference type="ChEBI" id="CHEBI:36208"/>
    </ligand>
</feature>
<feature type="binding site" evidence="1">
    <location>
        <begin position="133"/>
        <end position="137"/>
    </location>
    <ligand>
        <name>NADP(+)</name>
        <dbReference type="ChEBI" id="CHEBI:58349"/>
    </ligand>
</feature>
<feature type="binding site" evidence="1">
    <location>
        <begin position="157"/>
        <end position="162"/>
    </location>
    <ligand>
        <name>NADP(+)</name>
        <dbReference type="ChEBI" id="CHEBI:58349"/>
    </ligand>
</feature>
<feature type="binding site" evidence="1">
    <location>
        <position position="220"/>
    </location>
    <ligand>
        <name>NADP(+)</name>
        <dbReference type="ChEBI" id="CHEBI:58349"/>
    </ligand>
</feature>
<feature type="binding site" evidence="1">
    <location>
        <position position="222"/>
    </location>
    <ligand>
        <name>shikimate</name>
        <dbReference type="ChEBI" id="CHEBI:36208"/>
    </ligand>
</feature>
<feature type="binding site" evidence="1">
    <location>
        <position position="244"/>
    </location>
    <ligand>
        <name>NADP(+)</name>
        <dbReference type="ChEBI" id="CHEBI:58349"/>
    </ligand>
</feature>
<sequence>MARVENMTERYAVFGNPIGHSKSPKIHTMFAKETGQSLSYEAILAPIDAFEASFKEFAANEGYGANVTVPFKEQAFSLCDELSEQAQLAGAVNTLSVLADGKIRGDNTDGLGLVADLKRNLGDLCGLQVLLIGAGGAARGSVLPLLHSGIAKLTIVNRTQAKAEALVEIFTSYGDVTSLPITHVGQSYDVIINSTSSSLSGEVPNISPDTIAPHTVCYDMMYGKQSTAFNLWAKSLGAGQTIDGLGMLVGQAAASFSIWRKVTPSVEPVLAQLRSELIG</sequence>
<reference key="1">
    <citation type="submission" date="2008-01" db="EMBL/GenBank/DDBJ databases">
        <title>Complete sequence of Shewanella halifaxensis HAW-EB4.</title>
        <authorList>
            <consortium name="US DOE Joint Genome Institute"/>
            <person name="Copeland A."/>
            <person name="Lucas S."/>
            <person name="Lapidus A."/>
            <person name="Glavina del Rio T."/>
            <person name="Dalin E."/>
            <person name="Tice H."/>
            <person name="Bruce D."/>
            <person name="Goodwin L."/>
            <person name="Pitluck S."/>
            <person name="Sims D."/>
            <person name="Brettin T."/>
            <person name="Detter J.C."/>
            <person name="Han C."/>
            <person name="Kuske C.R."/>
            <person name="Schmutz J."/>
            <person name="Larimer F."/>
            <person name="Land M."/>
            <person name="Hauser L."/>
            <person name="Kyrpides N."/>
            <person name="Kim E."/>
            <person name="Zhao J.-S."/>
            <person name="Richardson P."/>
        </authorList>
    </citation>
    <scope>NUCLEOTIDE SEQUENCE [LARGE SCALE GENOMIC DNA]</scope>
    <source>
        <strain>HAW-EB4</strain>
    </source>
</reference>
<gene>
    <name evidence="1" type="primary">aroE</name>
    <name type="ordered locus">Shal_0035</name>
</gene>
<proteinExistence type="inferred from homology"/>
<protein>
    <recommendedName>
        <fullName evidence="1">Shikimate dehydrogenase (NADP(+))</fullName>
        <shortName evidence="1">SDH</shortName>
        <ecNumber evidence="1">1.1.1.25</ecNumber>
    </recommendedName>
</protein>